<dbReference type="EMBL" id="AY358114">
    <property type="protein sequence ID" value="AAQ88481.1"/>
    <property type="molecule type" value="mRNA"/>
</dbReference>
<dbReference type="EMBL" id="AK056372">
    <property type="protein sequence ID" value="BAB71167.1"/>
    <property type="molecule type" value="mRNA"/>
</dbReference>
<dbReference type="EMBL" id="AK172834">
    <property type="protein sequence ID" value="BAD18799.1"/>
    <property type="status" value="ALT_INIT"/>
    <property type="molecule type" value="mRNA"/>
</dbReference>
<dbReference type="EMBL" id="AK290972">
    <property type="protein sequence ID" value="BAF83661.1"/>
    <property type="molecule type" value="mRNA"/>
</dbReference>
<dbReference type="EMBL" id="CH471071">
    <property type="protein sequence ID" value="EAW58557.1"/>
    <property type="molecule type" value="Genomic_DNA"/>
</dbReference>
<dbReference type="EMBL" id="BC137514">
    <property type="protein sequence ID" value="AAI37515.1"/>
    <property type="molecule type" value="mRNA"/>
</dbReference>
<dbReference type="CCDS" id="CCDS6524.1"/>
<dbReference type="RefSeq" id="NP_001245211.1">
    <property type="nucleotide sequence ID" value="NM_001258282.3"/>
</dbReference>
<dbReference type="RefSeq" id="NP_001341503.1">
    <property type="nucleotide sequence ID" value="NM_001354574.2"/>
</dbReference>
<dbReference type="RefSeq" id="NP_001341504.1">
    <property type="nucleotide sequence ID" value="NM_001354575.2"/>
</dbReference>
<dbReference type="RefSeq" id="NP_689783.1">
    <property type="nucleotide sequence ID" value="NM_152570.4"/>
</dbReference>
<dbReference type="RefSeq" id="XP_011516021.1">
    <property type="nucleotide sequence ID" value="XM_011517719.1"/>
</dbReference>
<dbReference type="RefSeq" id="XP_011516026.1">
    <property type="nucleotide sequence ID" value="XM_011517724.3"/>
</dbReference>
<dbReference type="RefSeq" id="XP_011516030.1">
    <property type="nucleotide sequence ID" value="XM_011517728.3"/>
</dbReference>
<dbReference type="RefSeq" id="XP_016869792.1">
    <property type="nucleotide sequence ID" value="XM_017014303.3"/>
</dbReference>
<dbReference type="RefSeq" id="XP_016869793.1">
    <property type="nucleotide sequence ID" value="XM_017014304.2"/>
</dbReference>
<dbReference type="RefSeq" id="XP_016869794.1">
    <property type="nucleotide sequence ID" value="XM_017014305.2"/>
</dbReference>
<dbReference type="RefSeq" id="XP_016869795.1">
    <property type="nucleotide sequence ID" value="XM_017014306.3"/>
</dbReference>
<dbReference type="RefSeq" id="XP_016869796.1">
    <property type="nucleotide sequence ID" value="XM_017014307.2"/>
</dbReference>
<dbReference type="RefSeq" id="XP_047278766.1">
    <property type="nucleotide sequence ID" value="XM_047422810.1"/>
</dbReference>
<dbReference type="RefSeq" id="XP_047278767.1">
    <property type="nucleotide sequence ID" value="XM_047422811.1"/>
</dbReference>
<dbReference type="RefSeq" id="XP_047278768.1">
    <property type="nucleotide sequence ID" value="XM_047422812.1"/>
</dbReference>
<dbReference type="RefSeq" id="XP_047278769.1">
    <property type="nucleotide sequence ID" value="XM_047422813.1"/>
</dbReference>
<dbReference type="RefSeq" id="XP_047278770.1">
    <property type="nucleotide sequence ID" value="XM_047422814.1"/>
</dbReference>
<dbReference type="RefSeq" id="XP_047278771.1">
    <property type="nucleotide sequence ID" value="XM_047422815.1"/>
</dbReference>
<dbReference type="RefSeq" id="XP_047278772.1">
    <property type="nucleotide sequence ID" value="XM_047422816.1"/>
</dbReference>
<dbReference type="RefSeq" id="XP_047278773.1">
    <property type="nucleotide sequence ID" value="XM_047422817.1"/>
</dbReference>
<dbReference type="RefSeq" id="XP_047278774.1">
    <property type="nucleotide sequence ID" value="XM_047422818.1"/>
</dbReference>
<dbReference type="RefSeq" id="XP_054218005.1">
    <property type="nucleotide sequence ID" value="XM_054362030.1"/>
</dbReference>
<dbReference type="RefSeq" id="XP_054218006.1">
    <property type="nucleotide sequence ID" value="XM_054362031.1"/>
</dbReference>
<dbReference type="RefSeq" id="XP_054218007.1">
    <property type="nucleotide sequence ID" value="XM_054362032.1"/>
</dbReference>
<dbReference type="RefSeq" id="XP_054218008.1">
    <property type="nucleotide sequence ID" value="XM_054362033.1"/>
</dbReference>
<dbReference type="RefSeq" id="XP_054218009.1">
    <property type="nucleotide sequence ID" value="XM_054362034.1"/>
</dbReference>
<dbReference type="RefSeq" id="XP_054218010.1">
    <property type="nucleotide sequence ID" value="XM_054362035.1"/>
</dbReference>
<dbReference type="RefSeq" id="XP_054218011.1">
    <property type="nucleotide sequence ID" value="XM_054362036.1"/>
</dbReference>
<dbReference type="RefSeq" id="XP_054218012.1">
    <property type="nucleotide sequence ID" value="XM_054362037.1"/>
</dbReference>
<dbReference type="RefSeq" id="XP_054218013.1">
    <property type="nucleotide sequence ID" value="XM_054362038.1"/>
</dbReference>
<dbReference type="RefSeq" id="XP_054218014.1">
    <property type="nucleotide sequence ID" value="XM_054362039.1"/>
</dbReference>
<dbReference type="RefSeq" id="XP_054218015.1">
    <property type="nucleotide sequence ID" value="XM_054362040.1"/>
</dbReference>
<dbReference type="RefSeq" id="XP_054218016.1">
    <property type="nucleotide sequence ID" value="XM_054362041.1"/>
</dbReference>
<dbReference type="RefSeq" id="XP_054218017.1">
    <property type="nucleotide sequence ID" value="XM_054362042.1"/>
</dbReference>
<dbReference type="RefSeq" id="XP_054218018.1">
    <property type="nucleotide sequence ID" value="XM_054362043.1"/>
</dbReference>
<dbReference type="RefSeq" id="XP_054218019.1">
    <property type="nucleotide sequence ID" value="XM_054362044.1"/>
</dbReference>
<dbReference type="RefSeq" id="XP_054218020.1">
    <property type="nucleotide sequence ID" value="XM_054362045.1"/>
</dbReference>
<dbReference type="RefSeq" id="XP_054218021.1">
    <property type="nucleotide sequence ID" value="XM_054362046.1"/>
</dbReference>
<dbReference type="RefSeq" id="XP_054218022.1">
    <property type="nucleotide sequence ID" value="XM_054362047.1"/>
</dbReference>
<dbReference type="RefSeq" id="XP_054218023.1">
    <property type="nucleotide sequence ID" value="XM_054362048.1"/>
</dbReference>
<dbReference type="RefSeq" id="XP_054218024.1">
    <property type="nucleotide sequence ID" value="XM_054362049.1"/>
</dbReference>
<dbReference type="RefSeq" id="XP_054218025.1">
    <property type="nucleotide sequence ID" value="XM_054362050.1"/>
</dbReference>
<dbReference type="RefSeq" id="XP_054218026.1">
    <property type="nucleotide sequence ID" value="XM_054362051.1"/>
</dbReference>
<dbReference type="SMR" id="Q7L985"/>
<dbReference type="BioGRID" id="127640">
    <property type="interactions" value="19"/>
</dbReference>
<dbReference type="FunCoup" id="Q7L985">
    <property type="interactions" value="34"/>
</dbReference>
<dbReference type="IntAct" id="Q7L985">
    <property type="interactions" value="16"/>
</dbReference>
<dbReference type="STRING" id="9606.ENSP00000369328"/>
<dbReference type="GlyCosmos" id="Q7L985">
    <property type="glycosylation" value="5 sites, No reported glycans"/>
</dbReference>
<dbReference type="GlyGen" id="Q7L985">
    <property type="glycosylation" value="5 sites, 2 N-linked glycans (2 sites)"/>
</dbReference>
<dbReference type="iPTMnet" id="Q7L985"/>
<dbReference type="PhosphoSitePlus" id="Q7L985"/>
<dbReference type="BioMuta" id="LINGO2"/>
<dbReference type="DMDM" id="172046190"/>
<dbReference type="jPOST" id="Q7L985"/>
<dbReference type="MassIVE" id="Q7L985"/>
<dbReference type="PaxDb" id="9606-ENSP00000369328"/>
<dbReference type="PeptideAtlas" id="Q7L985"/>
<dbReference type="ProteomicsDB" id="68843"/>
<dbReference type="Antibodypedia" id="3035">
    <property type="antibodies" value="147 antibodies from 23 providers"/>
</dbReference>
<dbReference type="DNASU" id="158038"/>
<dbReference type="Ensembl" id="ENST00000379992.6">
    <property type="protein sequence ID" value="ENSP00000369328.1"/>
    <property type="gene ID" value="ENSG00000174482.11"/>
</dbReference>
<dbReference type="Ensembl" id="ENST00000698399.1">
    <property type="protein sequence ID" value="ENSP00000513694.1"/>
    <property type="gene ID" value="ENSG00000174482.11"/>
</dbReference>
<dbReference type="Ensembl" id="ENST00000698400.1">
    <property type="protein sequence ID" value="ENSP00000513695.1"/>
    <property type="gene ID" value="ENSG00000174482.11"/>
</dbReference>
<dbReference type="Ensembl" id="ENST00000698401.1">
    <property type="protein sequence ID" value="ENSP00000513696.1"/>
    <property type="gene ID" value="ENSG00000174482.11"/>
</dbReference>
<dbReference type="Ensembl" id="ENST00000698402.1">
    <property type="protein sequence ID" value="ENSP00000513697.1"/>
    <property type="gene ID" value="ENSG00000174482.11"/>
</dbReference>
<dbReference type="Ensembl" id="ENST00000698403.1">
    <property type="protein sequence ID" value="ENSP00000513698.1"/>
    <property type="gene ID" value="ENSG00000174482.11"/>
</dbReference>
<dbReference type="GeneID" id="158038"/>
<dbReference type="KEGG" id="hsa:158038"/>
<dbReference type="MANE-Select" id="ENST00000698399.1">
    <property type="protein sequence ID" value="ENSP00000513694.1"/>
    <property type="RefSeq nucleotide sequence ID" value="NM_001258282.3"/>
    <property type="RefSeq protein sequence ID" value="NP_001245211.1"/>
</dbReference>
<dbReference type="UCSC" id="uc064smp.1">
    <property type="organism name" value="human"/>
</dbReference>
<dbReference type="AGR" id="HGNC:21207"/>
<dbReference type="CTD" id="158038"/>
<dbReference type="DisGeNET" id="158038"/>
<dbReference type="GeneCards" id="LINGO2"/>
<dbReference type="HGNC" id="HGNC:21207">
    <property type="gene designation" value="LINGO2"/>
</dbReference>
<dbReference type="HPA" id="ENSG00000174482">
    <property type="expression patterns" value="Tissue enhanced (endometrium, smooth muscle)"/>
</dbReference>
<dbReference type="MalaCards" id="LINGO2"/>
<dbReference type="MIM" id="609793">
    <property type="type" value="gene"/>
</dbReference>
<dbReference type="neXtProt" id="NX_Q7L985"/>
<dbReference type="OpenTargets" id="ENSG00000174482"/>
<dbReference type="PharmGKB" id="PA162394096"/>
<dbReference type="VEuPathDB" id="HostDB:ENSG00000174482"/>
<dbReference type="eggNOG" id="KOG0619">
    <property type="taxonomic scope" value="Eukaryota"/>
</dbReference>
<dbReference type="GeneTree" id="ENSGT00940000156665"/>
<dbReference type="HOGENOM" id="CLU_000288_18_24_1"/>
<dbReference type="InParanoid" id="Q7L985"/>
<dbReference type="OMA" id="TKAVVCH"/>
<dbReference type="OrthoDB" id="10061535at2759"/>
<dbReference type="PAN-GO" id="Q7L985">
    <property type="GO annotations" value="2 GO annotations based on evolutionary models"/>
</dbReference>
<dbReference type="PhylomeDB" id="Q7L985"/>
<dbReference type="TreeFam" id="TF334360"/>
<dbReference type="PathwayCommons" id="Q7L985"/>
<dbReference type="SignaLink" id="Q7L985"/>
<dbReference type="BioGRID-ORCS" id="158038">
    <property type="hits" value="14 hits in 1144 CRISPR screens"/>
</dbReference>
<dbReference type="ChiTaRS" id="LINGO2">
    <property type="organism name" value="human"/>
</dbReference>
<dbReference type="GenomeRNAi" id="158038"/>
<dbReference type="Pharos" id="Q7L985">
    <property type="development level" value="Tbio"/>
</dbReference>
<dbReference type="PRO" id="PR:Q7L985"/>
<dbReference type="Proteomes" id="UP000005640">
    <property type="component" value="Chromosome 9"/>
</dbReference>
<dbReference type="RNAct" id="Q7L985">
    <property type="molecule type" value="protein"/>
</dbReference>
<dbReference type="Bgee" id="ENSG00000174482">
    <property type="expression patterns" value="Expressed in secondary oocyte and 123 other cell types or tissues"/>
</dbReference>
<dbReference type="GO" id="GO:0031012">
    <property type="term" value="C:extracellular matrix"/>
    <property type="evidence" value="ECO:0000318"/>
    <property type="project" value="GO_Central"/>
</dbReference>
<dbReference type="GO" id="GO:0005615">
    <property type="term" value="C:extracellular space"/>
    <property type="evidence" value="ECO:0000318"/>
    <property type="project" value="GO_Central"/>
</dbReference>
<dbReference type="GO" id="GO:0098978">
    <property type="term" value="C:glutamatergic synapse"/>
    <property type="evidence" value="ECO:0007669"/>
    <property type="project" value="Ensembl"/>
</dbReference>
<dbReference type="GO" id="GO:0097060">
    <property type="term" value="C:synaptic membrane"/>
    <property type="evidence" value="ECO:0007669"/>
    <property type="project" value="Ensembl"/>
</dbReference>
<dbReference type="GO" id="GO:0051965">
    <property type="term" value="P:positive regulation of synapse assembly"/>
    <property type="evidence" value="ECO:0007669"/>
    <property type="project" value="Ensembl"/>
</dbReference>
<dbReference type="FunFam" id="2.60.40.10:FF:000076">
    <property type="entry name" value="Leucine-rich repeat and Ig domain-containing 4"/>
    <property type="match status" value="1"/>
</dbReference>
<dbReference type="FunFam" id="3.80.10.10:FF:000014">
    <property type="entry name" value="Leucine-rich repeat and immunoglobulin-like domain-containing nogo receptor-interacting protein 1"/>
    <property type="match status" value="1"/>
</dbReference>
<dbReference type="Gene3D" id="2.60.40.10">
    <property type="entry name" value="Immunoglobulins"/>
    <property type="match status" value="1"/>
</dbReference>
<dbReference type="Gene3D" id="3.80.10.10">
    <property type="entry name" value="Ribonuclease Inhibitor"/>
    <property type="match status" value="1"/>
</dbReference>
<dbReference type="InterPro" id="IPR007110">
    <property type="entry name" value="Ig-like_dom"/>
</dbReference>
<dbReference type="InterPro" id="IPR036179">
    <property type="entry name" value="Ig-like_dom_sf"/>
</dbReference>
<dbReference type="InterPro" id="IPR013783">
    <property type="entry name" value="Ig-like_fold"/>
</dbReference>
<dbReference type="InterPro" id="IPR013098">
    <property type="entry name" value="Ig_I-set"/>
</dbReference>
<dbReference type="InterPro" id="IPR003599">
    <property type="entry name" value="Ig_sub"/>
</dbReference>
<dbReference type="InterPro" id="IPR003598">
    <property type="entry name" value="Ig_sub2"/>
</dbReference>
<dbReference type="InterPro" id="IPR001611">
    <property type="entry name" value="Leu-rich_rpt"/>
</dbReference>
<dbReference type="InterPro" id="IPR003591">
    <property type="entry name" value="Leu-rich_rpt_typical-subtyp"/>
</dbReference>
<dbReference type="InterPro" id="IPR032675">
    <property type="entry name" value="LRR_dom_sf"/>
</dbReference>
<dbReference type="InterPro" id="IPR050541">
    <property type="entry name" value="LRR_TM_domain-containing"/>
</dbReference>
<dbReference type="InterPro" id="IPR000372">
    <property type="entry name" value="LRRNT"/>
</dbReference>
<dbReference type="PANTHER" id="PTHR24369">
    <property type="entry name" value="ANTIGEN BSP, PUTATIVE-RELATED"/>
    <property type="match status" value="1"/>
</dbReference>
<dbReference type="PANTHER" id="PTHR24369:SF156">
    <property type="entry name" value="LEUCINE RICH REPEAT AND IG DOMAIN CONTAINING 2"/>
    <property type="match status" value="1"/>
</dbReference>
<dbReference type="Pfam" id="PF07679">
    <property type="entry name" value="I-set"/>
    <property type="match status" value="1"/>
</dbReference>
<dbReference type="Pfam" id="PF00560">
    <property type="entry name" value="LRR_1"/>
    <property type="match status" value="1"/>
</dbReference>
<dbReference type="Pfam" id="PF13855">
    <property type="entry name" value="LRR_8"/>
    <property type="match status" value="2"/>
</dbReference>
<dbReference type="SMART" id="SM00409">
    <property type="entry name" value="IG"/>
    <property type="match status" value="1"/>
</dbReference>
<dbReference type="SMART" id="SM00408">
    <property type="entry name" value="IGc2"/>
    <property type="match status" value="1"/>
</dbReference>
<dbReference type="SMART" id="SM00369">
    <property type="entry name" value="LRR_TYP"/>
    <property type="match status" value="10"/>
</dbReference>
<dbReference type="SMART" id="SM00013">
    <property type="entry name" value="LRRNT"/>
    <property type="match status" value="1"/>
</dbReference>
<dbReference type="SUPFAM" id="SSF48726">
    <property type="entry name" value="Immunoglobulin"/>
    <property type="match status" value="1"/>
</dbReference>
<dbReference type="SUPFAM" id="SSF52058">
    <property type="entry name" value="L domain-like"/>
    <property type="match status" value="1"/>
</dbReference>
<dbReference type="PROSITE" id="PS50835">
    <property type="entry name" value="IG_LIKE"/>
    <property type="match status" value="1"/>
</dbReference>
<dbReference type="PROSITE" id="PS51450">
    <property type="entry name" value="LRR"/>
    <property type="match status" value="11"/>
</dbReference>
<sequence>MLHTAISCWQPFLGLAVVLIFMGSTIGCPARCECSAQNKSVSCHRRRLIAIPEGIPIETKILDLSKNRLKSVNPEEFISYPLLEEIDLSDNIIANVEPGAFNNLFNLRSLRLKGNRLKLVPLGVFTGLSNLTKLDISENKIVILLDYMFQDLHNLKSLEVGDNDLVYISHRAFSGLLSLEQLTLEKCNLTAVPTEALSHLRSLISLHLKHLNINNMPVYAFKRLFHLKHLEIDYWPLLDMMPANSLYGLNLTSLSVTNTNLSTVPFLAFKHLVYLTHLNLSYNPISTIEAGMFSDLIRLQELHIVGAQLRTIEPHSFQGLRFLRVLNVSQNLLETLEENVFSSPRALEVLSINNNPLACDCRLLWILQRQPTLQFGGQQPMCAGPDTIRERSFKDFHSTALSFYFTCKKPKIREKKLQHLLVDEGQTVQLECSADGDPQPVISWVTPRRRFITTKSNGRATVLGDGTLEIRFAQDQDSGMYVCIASNAAGNDTFTASLTVKGFASDRFLYANRTPMYMTDSNDTISNGTNANTFSLDLKTILVSTAMGCFTFLGVVLFCFLLLFVWSRGKGKHKNSIDLEYVPRKNNGAVVEGEVAGPRRFNMKMI</sequence>
<reference key="1">
    <citation type="journal article" date="2003" name="Genome Res.">
        <title>The secreted protein discovery initiative (SPDI), a large-scale effort to identify novel human secreted and transmembrane proteins: a bioinformatics assessment.</title>
        <authorList>
            <person name="Clark H.F."/>
            <person name="Gurney A.L."/>
            <person name="Abaya E."/>
            <person name="Baker K."/>
            <person name="Baldwin D.T."/>
            <person name="Brush J."/>
            <person name="Chen J."/>
            <person name="Chow B."/>
            <person name="Chui C."/>
            <person name="Crowley C."/>
            <person name="Currell B."/>
            <person name="Deuel B."/>
            <person name="Dowd P."/>
            <person name="Eaton D."/>
            <person name="Foster J.S."/>
            <person name="Grimaldi C."/>
            <person name="Gu Q."/>
            <person name="Hass P.E."/>
            <person name="Heldens S."/>
            <person name="Huang A."/>
            <person name="Kim H.S."/>
            <person name="Klimowski L."/>
            <person name="Jin Y."/>
            <person name="Johnson S."/>
            <person name="Lee J."/>
            <person name="Lewis L."/>
            <person name="Liao D."/>
            <person name="Mark M.R."/>
            <person name="Robbie E."/>
            <person name="Sanchez C."/>
            <person name="Schoenfeld J."/>
            <person name="Seshagiri S."/>
            <person name="Simmons L."/>
            <person name="Singh J."/>
            <person name="Smith V."/>
            <person name="Stinson J."/>
            <person name="Vagts A."/>
            <person name="Vandlen R.L."/>
            <person name="Watanabe C."/>
            <person name="Wieand D."/>
            <person name="Woods K."/>
            <person name="Xie M.-H."/>
            <person name="Yansura D.G."/>
            <person name="Yi S."/>
            <person name="Yu G."/>
            <person name="Yuan J."/>
            <person name="Zhang M."/>
            <person name="Zhang Z."/>
            <person name="Goddard A.D."/>
            <person name="Wood W.I."/>
            <person name="Godowski P.J."/>
            <person name="Gray A.M."/>
        </authorList>
    </citation>
    <scope>NUCLEOTIDE SEQUENCE [LARGE SCALE MRNA]</scope>
</reference>
<reference key="2">
    <citation type="journal article" date="2004" name="Nat. Genet.">
        <title>Complete sequencing and characterization of 21,243 full-length human cDNAs.</title>
        <authorList>
            <person name="Ota T."/>
            <person name="Suzuki Y."/>
            <person name="Nishikawa T."/>
            <person name="Otsuki T."/>
            <person name="Sugiyama T."/>
            <person name="Irie R."/>
            <person name="Wakamatsu A."/>
            <person name="Hayashi K."/>
            <person name="Sato H."/>
            <person name="Nagai K."/>
            <person name="Kimura K."/>
            <person name="Makita H."/>
            <person name="Sekine M."/>
            <person name="Obayashi M."/>
            <person name="Nishi T."/>
            <person name="Shibahara T."/>
            <person name="Tanaka T."/>
            <person name="Ishii S."/>
            <person name="Yamamoto J."/>
            <person name="Saito K."/>
            <person name="Kawai Y."/>
            <person name="Isono Y."/>
            <person name="Nakamura Y."/>
            <person name="Nagahari K."/>
            <person name="Murakami K."/>
            <person name="Yasuda T."/>
            <person name="Iwayanagi T."/>
            <person name="Wagatsuma M."/>
            <person name="Shiratori A."/>
            <person name="Sudo H."/>
            <person name="Hosoiri T."/>
            <person name="Kaku Y."/>
            <person name="Kodaira H."/>
            <person name="Kondo H."/>
            <person name="Sugawara M."/>
            <person name="Takahashi M."/>
            <person name="Kanda K."/>
            <person name="Yokoi T."/>
            <person name="Furuya T."/>
            <person name="Kikkawa E."/>
            <person name="Omura Y."/>
            <person name="Abe K."/>
            <person name="Kamihara K."/>
            <person name="Katsuta N."/>
            <person name="Sato K."/>
            <person name="Tanikawa M."/>
            <person name="Yamazaki M."/>
            <person name="Ninomiya K."/>
            <person name="Ishibashi T."/>
            <person name="Yamashita H."/>
            <person name="Murakawa K."/>
            <person name="Fujimori K."/>
            <person name="Tanai H."/>
            <person name="Kimata M."/>
            <person name="Watanabe M."/>
            <person name="Hiraoka S."/>
            <person name="Chiba Y."/>
            <person name="Ishida S."/>
            <person name="Ono Y."/>
            <person name="Takiguchi S."/>
            <person name="Watanabe S."/>
            <person name="Yosida M."/>
            <person name="Hotuta T."/>
            <person name="Kusano J."/>
            <person name="Kanehori K."/>
            <person name="Takahashi-Fujii A."/>
            <person name="Hara H."/>
            <person name="Tanase T.-O."/>
            <person name="Nomura Y."/>
            <person name="Togiya S."/>
            <person name="Komai F."/>
            <person name="Hara R."/>
            <person name="Takeuchi K."/>
            <person name="Arita M."/>
            <person name="Imose N."/>
            <person name="Musashino K."/>
            <person name="Yuuki H."/>
            <person name="Oshima A."/>
            <person name="Sasaki N."/>
            <person name="Aotsuka S."/>
            <person name="Yoshikawa Y."/>
            <person name="Matsunawa H."/>
            <person name="Ichihara T."/>
            <person name="Shiohata N."/>
            <person name="Sano S."/>
            <person name="Moriya S."/>
            <person name="Momiyama H."/>
            <person name="Satoh N."/>
            <person name="Takami S."/>
            <person name="Terashima Y."/>
            <person name="Suzuki O."/>
            <person name="Nakagawa S."/>
            <person name="Senoh A."/>
            <person name="Mizoguchi H."/>
            <person name="Goto Y."/>
            <person name="Shimizu F."/>
            <person name="Wakebe H."/>
            <person name="Hishigaki H."/>
            <person name="Watanabe T."/>
            <person name="Sugiyama A."/>
            <person name="Takemoto M."/>
            <person name="Kawakami B."/>
            <person name="Yamazaki M."/>
            <person name="Watanabe K."/>
            <person name="Kumagai A."/>
            <person name="Itakura S."/>
            <person name="Fukuzumi Y."/>
            <person name="Fujimori Y."/>
            <person name="Komiyama M."/>
            <person name="Tashiro H."/>
            <person name="Tanigami A."/>
            <person name="Fujiwara T."/>
            <person name="Ono T."/>
            <person name="Yamada K."/>
            <person name="Fujii Y."/>
            <person name="Ozaki K."/>
            <person name="Hirao M."/>
            <person name="Ohmori Y."/>
            <person name="Kawabata A."/>
            <person name="Hikiji T."/>
            <person name="Kobatake N."/>
            <person name="Inagaki H."/>
            <person name="Ikema Y."/>
            <person name="Okamoto S."/>
            <person name="Okitani R."/>
            <person name="Kawakami T."/>
            <person name="Noguchi S."/>
            <person name="Itoh T."/>
            <person name="Shigeta K."/>
            <person name="Senba T."/>
            <person name="Matsumura K."/>
            <person name="Nakajima Y."/>
            <person name="Mizuno T."/>
            <person name="Morinaga M."/>
            <person name="Sasaki M."/>
            <person name="Togashi T."/>
            <person name="Oyama M."/>
            <person name="Hata H."/>
            <person name="Watanabe M."/>
            <person name="Komatsu T."/>
            <person name="Mizushima-Sugano J."/>
            <person name="Satoh T."/>
            <person name="Shirai Y."/>
            <person name="Takahashi Y."/>
            <person name="Nakagawa K."/>
            <person name="Okumura K."/>
            <person name="Nagase T."/>
            <person name="Nomura N."/>
            <person name="Kikuchi H."/>
            <person name="Masuho Y."/>
            <person name="Yamashita R."/>
            <person name="Nakai K."/>
            <person name="Yada T."/>
            <person name="Nakamura Y."/>
            <person name="Ohara O."/>
            <person name="Isogai T."/>
            <person name="Sugano S."/>
        </authorList>
    </citation>
    <scope>NUCLEOTIDE SEQUENCE [LARGE SCALE MRNA]</scope>
</reference>
<reference key="3">
    <citation type="submission" date="2005-09" db="EMBL/GenBank/DDBJ databases">
        <authorList>
            <person name="Mural R.J."/>
            <person name="Istrail S."/>
            <person name="Sutton G.G."/>
            <person name="Florea L."/>
            <person name="Halpern A.L."/>
            <person name="Mobarry C.M."/>
            <person name="Lippert R."/>
            <person name="Walenz B."/>
            <person name="Shatkay H."/>
            <person name="Dew I."/>
            <person name="Miller J.R."/>
            <person name="Flanigan M.J."/>
            <person name="Edwards N.J."/>
            <person name="Bolanos R."/>
            <person name="Fasulo D."/>
            <person name="Halldorsson B.V."/>
            <person name="Hannenhalli S."/>
            <person name="Turner R."/>
            <person name="Yooseph S."/>
            <person name="Lu F."/>
            <person name="Nusskern D.R."/>
            <person name="Shue B.C."/>
            <person name="Zheng X.H."/>
            <person name="Zhong F."/>
            <person name="Delcher A.L."/>
            <person name="Huson D.H."/>
            <person name="Kravitz S.A."/>
            <person name="Mouchard L."/>
            <person name="Reinert K."/>
            <person name="Remington K.A."/>
            <person name="Clark A.G."/>
            <person name="Waterman M.S."/>
            <person name="Eichler E.E."/>
            <person name="Adams M.D."/>
            <person name="Hunkapiller M.W."/>
            <person name="Myers E.W."/>
            <person name="Venter J.C."/>
        </authorList>
    </citation>
    <scope>NUCLEOTIDE SEQUENCE [LARGE SCALE GENOMIC DNA]</scope>
</reference>
<reference key="4">
    <citation type="journal article" date="2004" name="Genome Res.">
        <title>The status, quality, and expansion of the NIH full-length cDNA project: the Mammalian Gene Collection (MGC).</title>
        <authorList>
            <consortium name="The MGC Project Team"/>
        </authorList>
    </citation>
    <scope>NUCLEOTIDE SEQUENCE [LARGE SCALE MRNA]</scope>
    <source>
        <tissue>Brain</tissue>
    </source>
</reference>
<evidence type="ECO:0000255" key="1"/>
<evidence type="ECO:0000255" key="2">
    <source>
        <dbReference type="PROSITE-ProRule" id="PRU00114"/>
    </source>
</evidence>
<evidence type="ECO:0000305" key="3"/>
<proteinExistence type="evidence at protein level"/>
<feature type="signal peptide" evidence="1">
    <location>
        <begin position="1"/>
        <end position="27"/>
    </location>
</feature>
<feature type="chain" id="PRO_0000324389" description="Leucine-rich repeat and immunoglobulin-like domain-containing nogo receptor-interacting protein 2">
    <location>
        <begin position="28"/>
        <end position="606"/>
    </location>
</feature>
<feature type="topological domain" description="Extracellular" evidence="1">
    <location>
        <begin position="28"/>
        <end position="545"/>
    </location>
</feature>
<feature type="transmembrane region" description="Helical" evidence="1">
    <location>
        <begin position="546"/>
        <end position="566"/>
    </location>
</feature>
<feature type="topological domain" description="Cytoplasmic" evidence="1">
    <location>
        <begin position="567"/>
        <end position="606"/>
    </location>
</feature>
<feature type="domain" description="LRRNT">
    <location>
        <begin position="28"/>
        <end position="57"/>
    </location>
</feature>
<feature type="repeat" description="LRR 1">
    <location>
        <begin position="58"/>
        <end position="79"/>
    </location>
</feature>
<feature type="repeat" description="LRR 2">
    <location>
        <begin position="82"/>
        <end position="103"/>
    </location>
</feature>
<feature type="repeat" description="LRR 3">
    <location>
        <begin position="106"/>
        <end position="127"/>
    </location>
</feature>
<feature type="repeat" description="LRR 4">
    <location>
        <begin position="130"/>
        <end position="151"/>
    </location>
</feature>
<feature type="repeat" description="LRR 5">
    <location>
        <begin position="154"/>
        <end position="175"/>
    </location>
</feature>
<feature type="repeat" description="LRR 6">
    <location>
        <begin position="178"/>
        <end position="199"/>
    </location>
</feature>
<feature type="repeat" description="LRR 7">
    <location>
        <begin position="202"/>
        <end position="223"/>
    </location>
</feature>
<feature type="repeat" description="LRR 8">
    <location>
        <begin position="226"/>
        <end position="247"/>
    </location>
</feature>
<feature type="repeat" description="LRR 9">
    <location>
        <begin position="250"/>
        <end position="271"/>
    </location>
</feature>
<feature type="repeat" description="LRR 10">
    <location>
        <begin position="274"/>
        <end position="295"/>
    </location>
</feature>
<feature type="repeat" description="LRR 11">
    <location>
        <begin position="298"/>
        <end position="319"/>
    </location>
</feature>
<feature type="repeat" description="LRR 12">
    <location>
        <begin position="322"/>
        <end position="343"/>
    </location>
</feature>
<feature type="domain" description="LRRCT">
    <location>
        <begin position="355"/>
        <end position="409"/>
    </location>
</feature>
<feature type="domain" description="Ig-like C2-type">
    <location>
        <begin position="410"/>
        <end position="499"/>
    </location>
</feature>
<feature type="glycosylation site" description="N-linked (GlcNAc...) asparagine" evidence="1">
    <location>
        <position position="38"/>
    </location>
</feature>
<feature type="glycosylation site" description="N-linked (GlcNAc...) asparagine" evidence="1">
    <location>
        <position position="130"/>
    </location>
</feature>
<feature type="glycosylation site" description="N-linked (GlcNAc...) asparagine" evidence="1">
    <location>
        <position position="188"/>
    </location>
</feature>
<feature type="glycosylation site" description="N-linked (GlcNAc...) asparagine" evidence="1">
    <location>
        <position position="279"/>
    </location>
</feature>
<feature type="glycosylation site" description="N-linked (GlcNAc...) asparagine" evidence="1">
    <location>
        <position position="327"/>
    </location>
</feature>
<feature type="disulfide bond" evidence="2">
    <location>
        <begin position="432"/>
        <end position="483"/>
    </location>
</feature>
<feature type="sequence variant" id="VAR_039798" description="In dbSNP:rs17506843.">
    <original>R</original>
    <variation>H</variation>
    <location>
        <position position="507"/>
    </location>
</feature>
<feature type="sequence conflict" description="In Ref. 2; BAF83661." evidence="3" ref="2">
    <original>S</original>
    <variation>G</variation>
    <location>
        <position position="89"/>
    </location>
</feature>
<name>LIGO2_HUMAN</name>
<gene>
    <name type="primary">LINGO2</name>
    <name type="synonym">LERN3</name>
    <name type="synonym">LRRN6C</name>
    <name type="ORF">UNQ9234/PRO31993</name>
</gene>
<protein>
    <recommendedName>
        <fullName>Leucine-rich repeat and immunoglobulin-like domain-containing nogo receptor-interacting protein 2</fullName>
    </recommendedName>
    <alternativeName>
        <fullName>Leucine-rich repeat neuronal protein 3</fullName>
    </alternativeName>
    <alternativeName>
        <fullName>Leucine-rich repeat neuronal protein 6C</fullName>
    </alternativeName>
</protein>
<organism>
    <name type="scientific">Homo sapiens</name>
    <name type="common">Human</name>
    <dbReference type="NCBI Taxonomy" id="9606"/>
    <lineage>
        <taxon>Eukaryota</taxon>
        <taxon>Metazoa</taxon>
        <taxon>Chordata</taxon>
        <taxon>Craniata</taxon>
        <taxon>Vertebrata</taxon>
        <taxon>Euteleostomi</taxon>
        <taxon>Mammalia</taxon>
        <taxon>Eutheria</taxon>
        <taxon>Euarchontoglires</taxon>
        <taxon>Primates</taxon>
        <taxon>Haplorrhini</taxon>
        <taxon>Catarrhini</taxon>
        <taxon>Hominidae</taxon>
        <taxon>Homo</taxon>
    </lineage>
</organism>
<comment type="subcellular location">
    <subcellularLocation>
        <location evidence="3">Membrane</location>
        <topology evidence="3">Single-pass type I membrane protein</topology>
    </subcellularLocation>
</comment>
<comment type="sequence caution" evidence="3">
    <conflict type="erroneous initiation">
        <sequence resource="EMBL-CDS" id="BAD18799"/>
    </conflict>
</comment>
<keyword id="KW-1015">Disulfide bond</keyword>
<keyword id="KW-0325">Glycoprotein</keyword>
<keyword id="KW-0393">Immunoglobulin domain</keyword>
<keyword id="KW-0433">Leucine-rich repeat</keyword>
<keyword id="KW-0472">Membrane</keyword>
<keyword id="KW-1267">Proteomics identification</keyword>
<keyword id="KW-1185">Reference proteome</keyword>
<keyword id="KW-0677">Repeat</keyword>
<keyword id="KW-0732">Signal</keyword>
<keyword id="KW-0812">Transmembrane</keyword>
<keyword id="KW-1133">Transmembrane helix</keyword>
<accession>Q7L985</accession>
<accession>A8K4K7</accession>
<accession>B2RPM5</accession>
<accession>Q6ZMD0</accession>